<evidence type="ECO:0000250" key="1"/>
<evidence type="ECO:0000255" key="2">
    <source>
        <dbReference type="PROSITE-ProRule" id="PRU10035"/>
    </source>
</evidence>
<evidence type="ECO:0000255" key="3">
    <source>
        <dbReference type="PROSITE-ProRule" id="PRU10036"/>
    </source>
</evidence>
<evidence type="ECO:0000305" key="4"/>
<protein>
    <recommendedName>
        <fullName>Acidic phospholipase A2 4</fullName>
        <shortName>svPLA2</shortName>
        <ecNumber>3.1.1.4</ecNumber>
    </recommendedName>
    <alternativeName>
        <fullName>PLA2-IV</fullName>
    </alternativeName>
    <alternativeName>
        <fullName>Phosphatidylcholine 2-acylhydrolase</fullName>
    </alternativeName>
</protein>
<proteinExistence type="evidence at protein level"/>
<accession>P82895</accession>
<feature type="chain" id="PRO_0000161710" description="Acidic phospholipase A2 4">
    <location>
        <begin position="1"/>
        <end position="24" status="greater than"/>
    </location>
</feature>
<feature type="non-terminal residue">
    <location>
        <position position="24"/>
    </location>
</feature>
<comment type="function">
    <text>PLA2 catalyzes the calcium-dependent hydrolysis of the 2-acyl groups in 3-sn-phosphoglycerides.</text>
</comment>
<comment type="catalytic activity">
    <reaction evidence="2 3">
        <text>a 1,2-diacyl-sn-glycero-3-phosphocholine + H2O = a 1-acyl-sn-glycero-3-phosphocholine + a fatty acid + H(+)</text>
        <dbReference type="Rhea" id="RHEA:15801"/>
        <dbReference type="ChEBI" id="CHEBI:15377"/>
        <dbReference type="ChEBI" id="CHEBI:15378"/>
        <dbReference type="ChEBI" id="CHEBI:28868"/>
        <dbReference type="ChEBI" id="CHEBI:57643"/>
        <dbReference type="ChEBI" id="CHEBI:58168"/>
        <dbReference type="EC" id="3.1.1.4"/>
    </reaction>
</comment>
<comment type="cofactor">
    <cofactor evidence="1">
        <name>Ca(2+)</name>
        <dbReference type="ChEBI" id="CHEBI:29108"/>
    </cofactor>
    <text evidence="1">Binds 1 Ca(2+) ion.</text>
</comment>
<comment type="subcellular location">
    <subcellularLocation>
        <location>Secreted</location>
    </subcellularLocation>
</comment>
<comment type="tissue specificity">
    <text>Expressed by the venom gland.</text>
</comment>
<comment type="miscellaneous">
    <text>Hemolytic and neurotoxic activities are not detected (Ref.1).</text>
</comment>
<comment type="similarity">
    <text evidence="4">Belongs to the phospholipase A2 family. Group II subfamily.</text>
</comment>
<sequence length="24" mass="2834">NLMQFELLIMKVAGRSGIVWYSDY</sequence>
<name>PA2A4_TRIST</name>
<dbReference type="EC" id="3.1.1.4"/>
<dbReference type="GO" id="GO:0005576">
    <property type="term" value="C:extracellular region"/>
    <property type="evidence" value="ECO:0007669"/>
    <property type="project" value="UniProtKB-SubCell"/>
</dbReference>
<dbReference type="GO" id="GO:0004623">
    <property type="term" value="F:phospholipase A2 activity"/>
    <property type="evidence" value="ECO:0007669"/>
    <property type="project" value="UniProtKB-EC"/>
</dbReference>
<dbReference type="GO" id="GO:0016042">
    <property type="term" value="P:lipid catabolic process"/>
    <property type="evidence" value="ECO:0007669"/>
    <property type="project" value="UniProtKB-KW"/>
</dbReference>
<organism>
    <name type="scientific">Trimeresurus stejnegeri</name>
    <name type="common">Chinese green tree viper</name>
    <name type="synonym">Viridovipera stejnegeri</name>
    <dbReference type="NCBI Taxonomy" id="39682"/>
    <lineage>
        <taxon>Eukaryota</taxon>
        <taxon>Metazoa</taxon>
        <taxon>Chordata</taxon>
        <taxon>Craniata</taxon>
        <taxon>Vertebrata</taxon>
        <taxon>Euteleostomi</taxon>
        <taxon>Lepidosauria</taxon>
        <taxon>Squamata</taxon>
        <taxon>Bifurcata</taxon>
        <taxon>Unidentata</taxon>
        <taxon>Episquamata</taxon>
        <taxon>Toxicofera</taxon>
        <taxon>Serpentes</taxon>
        <taxon>Colubroidea</taxon>
        <taxon>Viperidae</taxon>
        <taxon>Crotalinae</taxon>
        <taxon>Trimeresurus</taxon>
    </lineage>
</organism>
<keyword id="KW-0106">Calcium</keyword>
<keyword id="KW-0903">Direct protein sequencing</keyword>
<keyword id="KW-0378">Hydrolase</keyword>
<keyword id="KW-0442">Lipid degradation</keyword>
<keyword id="KW-0443">Lipid metabolism</keyword>
<keyword id="KW-0964">Secreted</keyword>
<reference key="1">
    <citation type="journal article" date="2003" name="J. Hubei Univ.">
        <title>Isolation and sequencing of five variants of phospholipase A2 from venom of snake Trimeresurus stejnegeri.</title>
        <authorList>
            <person name="Li S.-Y."/>
            <person name="Guo Z.-X."/>
            <person name="Yang Y.-Y."/>
            <person name="Wang W.-Y."/>
            <person name="Xiong Y.-L."/>
        </authorList>
    </citation>
    <scope>PROTEIN SEQUENCE</scope>
    <source>
        <tissue>Venom</tissue>
    </source>
</reference>